<name>AROQ_LACP7</name>
<gene>
    <name evidence="1" type="primary">aroQ</name>
    <name type="ordered locus">Cphy_2531</name>
</gene>
<feature type="chain" id="PRO_1000077033" description="3-dehydroquinate dehydratase">
    <location>
        <begin position="1"/>
        <end position="145"/>
    </location>
</feature>
<feature type="active site" description="Proton acceptor" evidence="1">
    <location>
        <position position="22"/>
    </location>
</feature>
<feature type="active site" description="Proton donor" evidence="1">
    <location>
        <position position="100"/>
    </location>
</feature>
<feature type="binding site" evidence="1">
    <location>
        <position position="74"/>
    </location>
    <ligand>
        <name>substrate</name>
    </ligand>
</feature>
<feature type="binding site" evidence="1">
    <location>
        <position position="80"/>
    </location>
    <ligand>
        <name>substrate</name>
    </ligand>
</feature>
<feature type="binding site" evidence="1">
    <location>
        <position position="87"/>
    </location>
    <ligand>
        <name>substrate</name>
    </ligand>
</feature>
<feature type="binding site" evidence="1">
    <location>
        <begin position="101"/>
        <end position="102"/>
    </location>
    <ligand>
        <name>substrate</name>
    </ligand>
</feature>
<feature type="binding site" evidence="1">
    <location>
        <position position="111"/>
    </location>
    <ligand>
        <name>substrate</name>
    </ligand>
</feature>
<feature type="site" description="Transition state stabilizer" evidence="1">
    <location>
        <position position="17"/>
    </location>
</feature>
<reference key="1">
    <citation type="submission" date="2007-11" db="EMBL/GenBank/DDBJ databases">
        <title>Complete genome sequence of Clostridium phytofermentans ISDg.</title>
        <authorList>
            <person name="Leschine S.B."/>
            <person name="Warnick T.A."/>
            <person name="Blanchard J.L."/>
            <person name="Schnell D.J."/>
            <person name="Petit E.L."/>
            <person name="LaTouf W.G."/>
            <person name="Copeland A."/>
            <person name="Lucas S."/>
            <person name="Lapidus A."/>
            <person name="Barry K."/>
            <person name="Glavina del Rio T."/>
            <person name="Dalin E."/>
            <person name="Tice H."/>
            <person name="Pitluck S."/>
            <person name="Kiss H."/>
            <person name="Brettin T."/>
            <person name="Bruce D."/>
            <person name="Detter J.C."/>
            <person name="Han C."/>
            <person name="Kuske C."/>
            <person name="Schmutz J."/>
            <person name="Larimer F."/>
            <person name="Land M."/>
            <person name="Hauser L."/>
            <person name="Kyrpides N."/>
            <person name="Kim E.A."/>
            <person name="Richardson P."/>
        </authorList>
    </citation>
    <scope>NUCLEOTIDE SEQUENCE [LARGE SCALE GENOMIC DNA]</scope>
    <source>
        <strain>ATCC 700394 / DSM 18823 / ISDg</strain>
    </source>
</reference>
<organism>
    <name type="scientific">Lachnoclostridium phytofermentans (strain ATCC 700394 / DSM 18823 / ISDg)</name>
    <name type="common">Clostridium phytofermentans</name>
    <dbReference type="NCBI Taxonomy" id="357809"/>
    <lineage>
        <taxon>Bacteria</taxon>
        <taxon>Bacillati</taxon>
        <taxon>Bacillota</taxon>
        <taxon>Clostridia</taxon>
        <taxon>Lachnospirales</taxon>
        <taxon>Lachnospiraceae</taxon>
    </lineage>
</organism>
<dbReference type="EC" id="4.2.1.10" evidence="1"/>
<dbReference type="EMBL" id="CP000885">
    <property type="protein sequence ID" value="ABX42892.1"/>
    <property type="molecule type" value="Genomic_DNA"/>
</dbReference>
<dbReference type="RefSeq" id="WP_012200545.1">
    <property type="nucleotide sequence ID" value="NC_010001.1"/>
</dbReference>
<dbReference type="SMR" id="A9KMD8"/>
<dbReference type="STRING" id="357809.Cphy_2531"/>
<dbReference type="KEGG" id="cpy:Cphy_2531"/>
<dbReference type="eggNOG" id="COG0757">
    <property type="taxonomic scope" value="Bacteria"/>
</dbReference>
<dbReference type="HOGENOM" id="CLU_090968_3_0_9"/>
<dbReference type="OrthoDB" id="9790793at2"/>
<dbReference type="UniPathway" id="UPA00053">
    <property type="reaction ID" value="UER00086"/>
</dbReference>
<dbReference type="Proteomes" id="UP000000370">
    <property type="component" value="Chromosome"/>
</dbReference>
<dbReference type="GO" id="GO:0003855">
    <property type="term" value="F:3-dehydroquinate dehydratase activity"/>
    <property type="evidence" value="ECO:0007669"/>
    <property type="project" value="UniProtKB-UniRule"/>
</dbReference>
<dbReference type="GO" id="GO:0008652">
    <property type="term" value="P:amino acid biosynthetic process"/>
    <property type="evidence" value="ECO:0007669"/>
    <property type="project" value="UniProtKB-KW"/>
</dbReference>
<dbReference type="GO" id="GO:0009073">
    <property type="term" value="P:aromatic amino acid family biosynthetic process"/>
    <property type="evidence" value="ECO:0007669"/>
    <property type="project" value="UniProtKB-KW"/>
</dbReference>
<dbReference type="GO" id="GO:0009423">
    <property type="term" value="P:chorismate biosynthetic process"/>
    <property type="evidence" value="ECO:0007669"/>
    <property type="project" value="UniProtKB-UniRule"/>
</dbReference>
<dbReference type="GO" id="GO:0019631">
    <property type="term" value="P:quinate catabolic process"/>
    <property type="evidence" value="ECO:0007669"/>
    <property type="project" value="TreeGrafter"/>
</dbReference>
<dbReference type="CDD" id="cd00466">
    <property type="entry name" value="DHQase_II"/>
    <property type="match status" value="1"/>
</dbReference>
<dbReference type="Gene3D" id="3.40.50.9100">
    <property type="entry name" value="Dehydroquinase, class II"/>
    <property type="match status" value="1"/>
</dbReference>
<dbReference type="HAMAP" id="MF_00169">
    <property type="entry name" value="AroQ"/>
    <property type="match status" value="1"/>
</dbReference>
<dbReference type="InterPro" id="IPR001874">
    <property type="entry name" value="DHquinase_II"/>
</dbReference>
<dbReference type="InterPro" id="IPR018509">
    <property type="entry name" value="DHquinase_II_CS"/>
</dbReference>
<dbReference type="InterPro" id="IPR036441">
    <property type="entry name" value="DHquinase_II_sf"/>
</dbReference>
<dbReference type="NCBIfam" id="TIGR01088">
    <property type="entry name" value="aroQ"/>
    <property type="match status" value="1"/>
</dbReference>
<dbReference type="NCBIfam" id="NF003805">
    <property type="entry name" value="PRK05395.1-2"/>
    <property type="match status" value="1"/>
</dbReference>
<dbReference type="NCBIfam" id="NF003806">
    <property type="entry name" value="PRK05395.1-3"/>
    <property type="match status" value="1"/>
</dbReference>
<dbReference type="NCBIfam" id="NF003807">
    <property type="entry name" value="PRK05395.1-4"/>
    <property type="match status" value="1"/>
</dbReference>
<dbReference type="PANTHER" id="PTHR21272">
    <property type="entry name" value="CATABOLIC 3-DEHYDROQUINASE"/>
    <property type="match status" value="1"/>
</dbReference>
<dbReference type="PANTHER" id="PTHR21272:SF3">
    <property type="entry name" value="CATABOLIC 3-DEHYDROQUINASE"/>
    <property type="match status" value="1"/>
</dbReference>
<dbReference type="Pfam" id="PF01220">
    <property type="entry name" value="DHquinase_II"/>
    <property type="match status" value="1"/>
</dbReference>
<dbReference type="PIRSF" id="PIRSF001399">
    <property type="entry name" value="DHquinase_II"/>
    <property type="match status" value="1"/>
</dbReference>
<dbReference type="SUPFAM" id="SSF52304">
    <property type="entry name" value="Type II 3-dehydroquinate dehydratase"/>
    <property type="match status" value="1"/>
</dbReference>
<dbReference type="PROSITE" id="PS01029">
    <property type="entry name" value="DEHYDROQUINASE_II"/>
    <property type="match status" value="1"/>
</dbReference>
<keyword id="KW-0028">Amino-acid biosynthesis</keyword>
<keyword id="KW-0057">Aromatic amino acid biosynthesis</keyword>
<keyword id="KW-0456">Lyase</keyword>
<keyword id="KW-1185">Reference proteome</keyword>
<sequence>MKILVINGPNINFLGIREKAIYGKEDYPYLLSLLEGKAKKEGIEIVTFQSNGEGEIIDRIQEAYSDQTDAIIINPGAYTHYSYAIRDALASIEIPKIEVHISNVHKREEFRHVSVTAPVCTGQIVGLGLQGYLLAIDAIISMNIG</sequence>
<evidence type="ECO:0000255" key="1">
    <source>
        <dbReference type="HAMAP-Rule" id="MF_00169"/>
    </source>
</evidence>
<protein>
    <recommendedName>
        <fullName evidence="1">3-dehydroquinate dehydratase</fullName>
        <shortName evidence="1">3-dehydroquinase</shortName>
        <ecNumber evidence="1">4.2.1.10</ecNumber>
    </recommendedName>
    <alternativeName>
        <fullName evidence="1">Type II DHQase</fullName>
    </alternativeName>
</protein>
<accession>A9KMD8</accession>
<proteinExistence type="inferred from homology"/>
<comment type="function">
    <text evidence="1">Catalyzes a trans-dehydration via an enolate intermediate.</text>
</comment>
<comment type="catalytic activity">
    <reaction evidence="1">
        <text>3-dehydroquinate = 3-dehydroshikimate + H2O</text>
        <dbReference type="Rhea" id="RHEA:21096"/>
        <dbReference type="ChEBI" id="CHEBI:15377"/>
        <dbReference type="ChEBI" id="CHEBI:16630"/>
        <dbReference type="ChEBI" id="CHEBI:32364"/>
        <dbReference type="EC" id="4.2.1.10"/>
    </reaction>
</comment>
<comment type="pathway">
    <text evidence="1">Metabolic intermediate biosynthesis; chorismate biosynthesis; chorismate from D-erythrose 4-phosphate and phosphoenolpyruvate: step 3/7.</text>
</comment>
<comment type="subunit">
    <text evidence="1">Homododecamer.</text>
</comment>
<comment type="similarity">
    <text evidence="1">Belongs to the type-II 3-dehydroquinase family.</text>
</comment>